<organism>
    <name type="scientific">Streptomyces sp</name>
    <dbReference type="NCBI Taxonomy" id="1931"/>
    <lineage>
        <taxon>Bacteria</taxon>
        <taxon>Bacillati</taxon>
        <taxon>Actinomycetota</taxon>
        <taxon>Actinomycetes</taxon>
        <taxon>Kitasatosporales</taxon>
        <taxon>Streptomycetaceae</taxon>
        <taxon>Streptomyces</taxon>
    </lineage>
</organism>
<reference key="1">
    <citation type="journal article" date="2013" name="ChemBioChem">
        <title>Identification and characterization of bacterial diterpene cyclases that synthesize the cembrane skeleton.</title>
        <authorList>
            <person name="Meguro A."/>
            <person name="Tomita T."/>
            <person name="Nishiyama M."/>
            <person name="Kuzuyama T."/>
        </authorList>
    </citation>
    <scope>NUCLEOTIDE SEQUENCE [GENOMIC DNA]</scope>
    <scope>FUNCTION</scope>
    <scope>CATALYTIC ACTIVITY</scope>
    <scope>COFACTOR</scope>
    <scope>BIOPHYSICOCHEMICAL PROPERTIES</scope>
    <scope>SUBUNIT</scope>
    <source>
        <strain>SANK 60404</strain>
    </source>
</reference>
<sequence length="371" mass="41747">MTDPAVTPLAFSIPQLYCPFPTAIHPEVDTLTRAGMDFMTHHGFCNTEADRLVVANIDAGAIVARWYPNPDFPVDRLQMVTDFLYLYFLIDDLRFEVINSDTGLAGPIALFAQHLDLWEYPQAHRREELDLFHQAIHDLASRMAELTTPTKAARMRRSINGWFLALLREIALFNDDHAVMAEEYLPIRVVTVASRLMIDVNGFICPAEVPGDEWYSLKVQAAAEAAMSVCLYDNELYSAGKEQWLKSRATAHDRRPRNLVALIQAQTGGSTEHALQEVAEYRNRTVCLYLNLRSQLEKTASPALLAYLSVLDGVISGNLDAHATSSRYHNPDGHHPHAIAFTPLRTTDECSARAHTPIAPPIAWWWEQLDQ</sequence>
<accession>M1V9Q0</accession>
<name>DTCYA_STRSQ</name>
<proteinExistence type="evidence at protein level"/>
<protein>
    <recommendedName>
        <fullName evidence="3">Diterpene cyclase DtcycA</fullName>
    </recommendedName>
    <alternativeName>
        <fullName evidence="4">Cembrene C synthase</fullName>
        <ecNumber evidence="2">4.2.3.148</ecNumber>
    </alternativeName>
    <alternativeName>
        <fullName evidence="4">Nephthenol synthase</fullName>
        <ecNumber evidence="2">4.2.3.149</ecNumber>
    </alternativeName>
</protein>
<gene>
    <name evidence="3" type="primary">dtcycA</name>
</gene>
<dbReference type="EC" id="4.2.3.148" evidence="2"/>
<dbReference type="EC" id="4.2.3.149" evidence="2"/>
<dbReference type="EMBL" id="AB738084">
    <property type="protein sequence ID" value="BAM78697.1"/>
    <property type="molecule type" value="Genomic_DNA"/>
</dbReference>
<dbReference type="SMR" id="M1V9Q0"/>
<dbReference type="KEGG" id="ag:BAM78697"/>
<dbReference type="BRENDA" id="4.2.3.148">
    <property type="organism ID" value="1284"/>
</dbReference>
<dbReference type="BRENDA" id="4.2.3.149">
    <property type="organism ID" value="1284"/>
</dbReference>
<dbReference type="GO" id="GO:0046872">
    <property type="term" value="F:metal ion binding"/>
    <property type="evidence" value="ECO:0007669"/>
    <property type="project" value="UniProtKB-KW"/>
</dbReference>
<dbReference type="GO" id="GO:0010333">
    <property type="term" value="F:terpene synthase activity"/>
    <property type="evidence" value="ECO:0000314"/>
    <property type="project" value="UniProtKB"/>
</dbReference>
<dbReference type="Gene3D" id="1.10.600.10">
    <property type="entry name" value="Farnesyl Diphosphate Synthase"/>
    <property type="match status" value="1"/>
</dbReference>
<dbReference type="InterPro" id="IPR008949">
    <property type="entry name" value="Isoprenoid_synthase_dom_sf"/>
</dbReference>
<dbReference type="InterPro" id="IPR034686">
    <property type="entry name" value="Terpene_cyclase-like_2"/>
</dbReference>
<dbReference type="Pfam" id="PF19086">
    <property type="entry name" value="Terpene_syn_C_2"/>
    <property type="match status" value="1"/>
</dbReference>
<dbReference type="SFLD" id="SFLDS00005">
    <property type="entry name" value="Isoprenoid_Synthase_Type_I"/>
    <property type="match status" value="1"/>
</dbReference>
<dbReference type="SFLD" id="SFLDG01020">
    <property type="entry name" value="Terpene_Cyclase_Like_2"/>
    <property type="match status" value="1"/>
</dbReference>
<dbReference type="SUPFAM" id="SSF48576">
    <property type="entry name" value="Terpenoid synthases"/>
    <property type="match status" value="1"/>
</dbReference>
<comment type="function">
    <text evidence="2">Diterpene cyclases that can form multiple diterpene products.</text>
</comment>
<comment type="catalytic activity">
    <reaction evidence="2">
        <text>(2E,6E,10E)-geranylgeranyl diphosphate = cembrene C + diphosphate</text>
        <dbReference type="Rhea" id="RHEA:42988"/>
        <dbReference type="ChEBI" id="CHEBI:33019"/>
        <dbReference type="ChEBI" id="CHEBI:58756"/>
        <dbReference type="ChEBI" id="CHEBI:82798"/>
        <dbReference type="EC" id="4.2.3.148"/>
    </reaction>
</comment>
<comment type="catalytic activity">
    <reaction evidence="2">
        <text>(2E,6E,10E)-geranylgeranyl diphosphate + H2O = (R)-nephthenol + diphosphate</text>
        <dbReference type="Rhea" id="RHEA:42992"/>
        <dbReference type="ChEBI" id="CHEBI:15377"/>
        <dbReference type="ChEBI" id="CHEBI:33019"/>
        <dbReference type="ChEBI" id="CHEBI:58756"/>
        <dbReference type="ChEBI" id="CHEBI:82799"/>
        <dbReference type="EC" id="4.2.3.149"/>
    </reaction>
</comment>
<comment type="cofactor">
    <cofactor evidence="2">
        <name>Mg(2+)</name>
        <dbReference type="ChEBI" id="CHEBI:18420"/>
    </cofactor>
</comment>
<comment type="biophysicochemical properties">
    <kinetics>
        <KM evidence="2">93.7 uM for geranylgeranyl diphosphate</KM>
        <text evidence="2">kcat is 2.8 min(-1).</text>
    </kinetics>
</comment>
<comment type="subunit">
    <text evidence="2">Homodimer.</text>
</comment>
<comment type="similarity">
    <text evidence="4">Belongs to the terpene synthase family.</text>
</comment>
<feature type="chain" id="PRO_0000435481" description="Diterpene cyclase DtcycA">
    <location>
        <begin position="1"/>
        <end position="371"/>
    </location>
</feature>
<feature type="binding site" evidence="1">
    <location>
        <position position="234"/>
    </location>
    <ligand>
        <name>Mg(2+)</name>
        <dbReference type="ChEBI" id="CHEBI:18420"/>
    </ligand>
</feature>
<feature type="binding site" evidence="1">
    <location>
        <position position="238"/>
    </location>
    <ligand>
        <name>Mg(2+)</name>
        <dbReference type="ChEBI" id="CHEBI:18420"/>
    </ligand>
</feature>
<feature type="binding site" evidence="1">
    <location>
        <position position="242"/>
    </location>
    <ligand>
        <name>Mg(2+)</name>
        <dbReference type="ChEBI" id="CHEBI:18420"/>
    </ligand>
</feature>
<keyword id="KW-0456">Lyase</keyword>
<keyword id="KW-0460">Magnesium</keyword>
<keyword id="KW-0479">Metal-binding</keyword>
<evidence type="ECO:0000250" key="1">
    <source>
        <dbReference type="UniProtKB" id="Q9UR08"/>
    </source>
</evidence>
<evidence type="ECO:0000269" key="2">
    <source>
    </source>
</evidence>
<evidence type="ECO:0000303" key="3">
    <source>
    </source>
</evidence>
<evidence type="ECO:0000305" key="4"/>